<accession>F4IAG2</accession>
<accession>Q1WAB7</accession>
<accession>Q306T0</accession>
<accession>Q9SAA5</accession>
<sequence length="1042" mass="118512">MISYFLNQDFSRKKQGRMAASGPKSSGPRGFGRRTTVGSAQKRTQKKNGEKDSNATSTATNEVSGISKLPAAKVDVQKQSSVVLNERNVLDRSDIEDGSDRLDKKTTDDDDLLEQKLKLERENLRRKEIETLAAENLARGDRMFVYPVIVKPDEDIEVFLNRNLSTLNNEPDVLIMGAFNEWRWKSFTRRLEKTWIHEDWLSCLLHIPKEAYKMDFVFFNGQSVYDNNDSKDFCVEIKGGMDKVDFENFLLEEKLREQEKLAKEEAERERQKEEKRRIEAQKAAIEADRAQAKAETQKRRELLQPAIKKAVVSAENVWYIEPSDFKAEDTVKLYYNKRSGPLTNSKELWLHGGFNNWVDGLSIVVKLVNAELKDVDPKSGNWWFAEVVVPGGALVIDWVFADGPPKGAFLYDNNGYQDFHALVPQKLPEELYWLEEENMIFRKLQEDRRLKEEVMRAKMEKTARLKAETKERTLKKFLLSQKDVVYTEPLEIQAGNPVTVLYNPANTVLNGKPEVWFRGSFNRWTHRLGPLPPQKMEATDDESSHVKTTAKVPLDAYMMDFVFSEKEDGGIFDNKNGLDYHLPVVGGISKEPPLHIVHIAVEMAPIAKVGGLGDVVTSLSRAVQELNHNVDIVFPKYDCIKHNFVKDLQFNRSYHWGGTEIKVWHGKVEGLSVYFLDPQNGLFQRGCVYGCADDAGRFGFFCHAALEFLLQGGFHPDILHCHDWSSAPVSWLFKDHYTQYGLIKTRIVFTIHNLEFGANAIGKAMTFADKATTVSPTYAKEVAGNSVISAHLYKFHGIINGIDPDIWDPYNDNFIPVPYTSENVVEGKRAAKEELQNRLGLKSADFPVVGIITRLTHQKGIHLIKHAIWRTLERNGQVVLLGSAPDPRIQNDFVNLANQLHSSHGDRARLVLTYDEPLSHLIYAGADFILVPSIFEPCGLTQLIAMRYGAVPVVRKTGGLFDTVFDVDHDKERAQAQVLEPNGFSFDGADAPGVDYALNRAISAWYDGREWFNSLCKTVMEQDWSWNRPALEYLELYHSARK</sequence>
<comment type="function">
    <text evidence="4 6 7">Involved in the synthesis of glycan chains within amylopectin in leaves. May play a regulatory role in the control of starch accumulation in plastids.</text>
</comment>
<comment type="catalytic activity">
    <reaction>
        <text>[(1-&gt;4)-alpha-D-glucosyl](n) + ADP-alpha-D-glucose = [(1-&gt;4)-alpha-D-glucosyl](n+1) + ADP + H(+)</text>
        <dbReference type="Rhea" id="RHEA:18189"/>
        <dbReference type="Rhea" id="RHEA-COMP:9584"/>
        <dbReference type="Rhea" id="RHEA-COMP:9587"/>
        <dbReference type="ChEBI" id="CHEBI:15378"/>
        <dbReference type="ChEBI" id="CHEBI:15444"/>
        <dbReference type="ChEBI" id="CHEBI:57498"/>
        <dbReference type="ChEBI" id="CHEBI:456216"/>
        <dbReference type="EC" id="2.4.1.21"/>
    </reaction>
</comment>
<comment type="pathway">
    <text>Glycan biosynthesis; starch biosynthesis.</text>
</comment>
<comment type="interaction">
    <interactant intactId="EBI-7661720">
        <id>F4IAG2</id>
    </interactant>
    <interactant intactId="EBI-7661720">
        <id>F4IAG2</id>
        <label>SS3</label>
    </interactant>
    <organismsDiffer>false</organismsDiffer>
    <experiments>4</experiments>
</comment>
<comment type="subcellular location">
    <subcellularLocation>
        <location>Plastid</location>
        <location>Chloroplast</location>
    </subcellularLocation>
    <subcellularLocation>
        <location evidence="8">Plastid</location>
        <location evidence="8">Amyloplast</location>
    </subcellularLocation>
</comment>
<comment type="alternative products">
    <event type="alternative splicing"/>
    <isoform>
        <id>F4IAG2-1</id>
        <name>1</name>
        <sequence type="displayed"/>
    </isoform>
    <text>A number of isoforms are produced. According to EST sequences.</text>
</comment>
<comment type="tissue specificity">
    <text evidence="5">Expressed in leaves and flowers.</text>
</comment>
<comment type="disruption phenotype">
    <text evidence="4 5">No visible phenotype under normal growth conditions, but mutant plants accumulate increased levels of starch and have starch granules with alterated morphology.</text>
</comment>
<comment type="similarity">
    <text evidence="8">Belongs to the glycosyltransferase 1 family. Bacterial/plant glycogen synthase subfamily.</text>
</comment>
<comment type="sequence caution" evidence="8">
    <conflict type="erroneous initiation">
        <sequence resource="EMBL-CDS" id="AAD30251"/>
    </conflict>
    <text>Truncated N-terminus.</text>
</comment>
<evidence type="ECO:0000250" key="1"/>
<evidence type="ECO:0000255" key="2"/>
<evidence type="ECO:0000256" key="3">
    <source>
        <dbReference type="SAM" id="MobiDB-lite"/>
    </source>
</evidence>
<evidence type="ECO:0000269" key="4">
    <source>
    </source>
</evidence>
<evidence type="ECO:0000269" key="5">
    <source>
    </source>
</evidence>
<evidence type="ECO:0000269" key="6">
    <source>
    </source>
</evidence>
<evidence type="ECO:0000269" key="7">
    <source>
    </source>
</evidence>
<evidence type="ECO:0000305" key="8"/>
<name>SSY3_ARATH</name>
<feature type="transit peptide" description="Chloroplast" evidence="2">
    <location>
        <begin position="1"/>
        <end position="44"/>
    </location>
</feature>
<feature type="chain" id="PRO_0000419770" description="Starch synthase 3, chloroplastic/amyloplastic">
    <location>
        <begin position="45"/>
        <end position="1042"/>
    </location>
</feature>
<feature type="region of interest" description="Disordered" evidence="3">
    <location>
        <begin position="1"/>
        <end position="63"/>
    </location>
</feature>
<feature type="coiled-coil region" evidence="2">
    <location>
        <begin position="247"/>
        <end position="302"/>
    </location>
</feature>
<feature type="compositionally biased region" description="Polar residues" evidence="3">
    <location>
        <begin position="54"/>
        <end position="63"/>
    </location>
</feature>
<feature type="binding site" evidence="1">
    <location>
        <position position="608"/>
    </location>
    <ligand>
        <name>ADP-alpha-D-glucose</name>
        <dbReference type="ChEBI" id="CHEBI:57498"/>
    </ligand>
</feature>
<feature type="sequence conflict" description="In Ref. 3; ABB46391." evidence="8" ref="3">
    <original>G</original>
    <variation>D</variation>
    <location>
        <position position="741"/>
    </location>
</feature>
<feature type="sequence conflict" description="In Ref. 3; ABB46391." evidence="8" ref="3">
    <original>R</original>
    <variation>C</variation>
    <location>
        <position position="1041"/>
    </location>
</feature>
<reference key="1">
    <citation type="journal article" date="2000" name="Nature">
        <title>Sequence and analysis of chromosome 1 of the plant Arabidopsis thaliana.</title>
        <authorList>
            <person name="Theologis A."/>
            <person name="Ecker J.R."/>
            <person name="Palm C.J."/>
            <person name="Federspiel N.A."/>
            <person name="Kaul S."/>
            <person name="White O."/>
            <person name="Alonso J."/>
            <person name="Altafi H."/>
            <person name="Araujo R."/>
            <person name="Bowman C.L."/>
            <person name="Brooks S.Y."/>
            <person name="Buehler E."/>
            <person name="Chan A."/>
            <person name="Chao Q."/>
            <person name="Chen H."/>
            <person name="Cheuk R.F."/>
            <person name="Chin C.W."/>
            <person name="Chung M.K."/>
            <person name="Conn L."/>
            <person name="Conway A.B."/>
            <person name="Conway A.R."/>
            <person name="Creasy T.H."/>
            <person name="Dewar K."/>
            <person name="Dunn P."/>
            <person name="Etgu P."/>
            <person name="Feldblyum T.V."/>
            <person name="Feng J.-D."/>
            <person name="Fong B."/>
            <person name="Fujii C.Y."/>
            <person name="Gill J.E."/>
            <person name="Goldsmith A.D."/>
            <person name="Haas B."/>
            <person name="Hansen N.F."/>
            <person name="Hughes B."/>
            <person name="Huizar L."/>
            <person name="Hunter J.L."/>
            <person name="Jenkins J."/>
            <person name="Johnson-Hopson C."/>
            <person name="Khan S."/>
            <person name="Khaykin E."/>
            <person name="Kim C.J."/>
            <person name="Koo H.L."/>
            <person name="Kremenetskaia I."/>
            <person name="Kurtz D.B."/>
            <person name="Kwan A."/>
            <person name="Lam B."/>
            <person name="Langin-Hooper S."/>
            <person name="Lee A."/>
            <person name="Lee J.M."/>
            <person name="Lenz C.A."/>
            <person name="Li J.H."/>
            <person name="Li Y.-P."/>
            <person name="Lin X."/>
            <person name="Liu S.X."/>
            <person name="Liu Z.A."/>
            <person name="Luros J.S."/>
            <person name="Maiti R."/>
            <person name="Marziali A."/>
            <person name="Militscher J."/>
            <person name="Miranda M."/>
            <person name="Nguyen M."/>
            <person name="Nierman W.C."/>
            <person name="Osborne B.I."/>
            <person name="Pai G."/>
            <person name="Peterson J."/>
            <person name="Pham P.K."/>
            <person name="Rizzo M."/>
            <person name="Rooney T."/>
            <person name="Rowley D."/>
            <person name="Sakano H."/>
            <person name="Salzberg S.L."/>
            <person name="Schwartz J.R."/>
            <person name="Shinn P."/>
            <person name="Southwick A.M."/>
            <person name="Sun H."/>
            <person name="Tallon L.J."/>
            <person name="Tambunga G."/>
            <person name="Toriumi M.J."/>
            <person name="Town C.D."/>
            <person name="Utterback T."/>
            <person name="Van Aken S."/>
            <person name="Vaysberg M."/>
            <person name="Vysotskaia V.S."/>
            <person name="Walker M."/>
            <person name="Wu D."/>
            <person name="Yu G."/>
            <person name="Fraser C.M."/>
            <person name="Venter J.C."/>
            <person name="Davis R.W."/>
        </authorList>
    </citation>
    <scope>NUCLEOTIDE SEQUENCE [LARGE SCALE GENOMIC DNA]</scope>
    <source>
        <strain>cv. Columbia</strain>
    </source>
</reference>
<reference key="2">
    <citation type="journal article" date="2017" name="Plant J.">
        <title>Araport11: a complete reannotation of the Arabidopsis thaliana reference genome.</title>
        <authorList>
            <person name="Cheng C.Y."/>
            <person name="Krishnakumar V."/>
            <person name="Chan A.P."/>
            <person name="Thibaud-Nissen F."/>
            <person name="Schobel S."/>
            <person name="Town C.D."/>
        </authorList>
    </citation>
    <scope>GENOME REANNOTATION</scope>
    <source>
        <strain>cv. Columbia</strain>
    </source>
</reference>
<reference key="3">
    <citation type="journal article" date="2005" name="Plant Physiol.">
        <title>Mutations affecting starch synthase III in Arabidopsis alter leaf starch structure and increase the rate of starch synthesis.</title>
        <authorList>
            <person name="Zhang X."/>
            <person name="Myers A.M."/>
            <person name="James M.G."/>
        </authorList>
    </citation>
    <scope>NUCLEOTIDE SEQUENCE [MRNA] OF 18-1042</scope>
    <scope>FUNCTION</scope>
    <scope>DISRUPTION PHENOTYPE</scope>
</reference>
<reference key="4">
    <citation type="journal article" date="2008" name="Biochemistry">
        <title>Role of the N-terminal starch-binding domains in the kinetic properties of starch synthase III from Arabidopsis thaliana.</title>
        <authorList>
            <person name="Valdez H.A."/>
            <person name="Busi M.V."/>
            <person name="Wayllace N.Z."/>
            <person name="Parisi G."/>
            <person name="Ugalde R.A."/>
            <person name="Gomez-Casati D.F."/>
        </authorList>
    </citation>
    <scope>NUCLEOTIDE SEQUENCE [MRNA] OF 18-1042 AND 595-1042</scope>
    <source>
        <strain>cv. Columbia</strain>
    </source>
</reference>
<reference key="5">
    <citation type="journal article" date="2007" name="Plant J.">
        <title>The phenotype of soluble starch synthase IV defective mutants of Arabidopsis thaliana suggests a novel function of elongation enzymes in the control of starch granule formation.</title>
        <authorList>
            <person name="Roldan I."/>
            <person name="Wattebled F."/>
            <person name="Mercedes Lucas M."/>
            <person name="Delvalle D."/>
            <person name="Planchot V."/>
            <person name="Jimenez S."/>
            <person name="Perez R."/>
            <person name="Ball S."/>
            <person name="D'Hulst C."/>
            <person name="Merida A."/>
        </authorList>
    </citation>
    <scope>TISSUE SPECIFICITY</scope>
    <scope>DISRUPTION PHENOTYPE</scope>
    <source>
        <strain>cv. Columbia</strain>
    </source>
</reference>
<reference key="6">
    <citation type="journal article" date="2008" name="BMC Plant Biol.">
        <title>Overlapping functions of the starch synthases SSII and SSIII in amylopectin biosynthesis in Arabidopsis.</title>
        <authorList>
            <person name="Zhang X."/>
            <person name="Szydlowski N."/>
            <person name="Delvalle D."/>
            <person name="D'Hulst C."/>
            <person name="James M.G."/>
            <person name="Myers A.M."/>
        </authorList>
    </citation>
    <scope>FUNCTION</scope>
    <source>
        <strain>cv. Columbia</strain>
    </source>
</reference>
<reference key="7">
    <citation type="journal article" date="2009" name="Plant Cell">
        <title>Starch granule initiation in Arabidopsis requires the presence of either class IV or class III starch synthases.</title>
        <authorList>
            <person name="Szydlowski N."/>
            <person name="Ragel P."/>
            <person name="Raynaud S."/>
            <person name="Lucas M.M."/>
            <person name="Roldan I."/>
            <person name="Montero M."/>
            <person name="Munoz F.J."/>
            <person name="Ovecka M."/>
            <person name="Bahaji A."/>
            <person name="Planchot V."/>
            <person name="Pozueta-Romero J."/>
            <person name="D'Hulst C."/>
            <person name="Merida A."/>
        </authorList>
    </citation>
    <scope>FUNCTION</scope>
    <source>
        <strain>cv. Wassilewskija</strain>
    </source>
</reference>
<dbReference type="EC" id="2.4.1.21"/>
<dbReference type="EMBL" id="AC007296">
    <property type="protein sequence ID" value="AAD30251.1"/>
    <property type="status" value="ALT_INIT"/>
    <property type="molecule type" value="Genomic_DNA"/>
</dbReference>
<dbReference type="EMBL" id="CP002684">
    <property type="protein sequence ID" value="AEE28774.1"/>
    <property type="molecule type" value="Genomic_DNA"/>
</dbReference>
<dbReference type="EMBL" id="DQ241810">
    <property type="protein sequence ID" value="ABB46391.1"/>
    <property type="molecule type" value="mRNA"/>
</dbReference>
<dbReference type="EMBL" id="EF636491">
    <property type="protein sequence ID" value="ABU96740.1"/>
    <property type="molecule type" value="mRNA"/>
</dbReference>
<dbReference type="EMBL" id="DQ415727">
    <property type="protein sequence ID" value="ABD77100.1"/>
    <property type="molecule type" value="mRNA"/>
</dbReference>
<dbReference type="PIR" id="H86250">
    <property type="entry name" value="H86250"/>
</dbReference>
<dbReference type="RefSeq" id="NP_172637.2">
    <molecule id="F4IAG2-1"/>
    <property type="nucleotide sequence ID" value="NM_101044.3"/>
</dbReference>
<dbReference type="SMR" id="F4IAG2"/>
<dbReference type="BioGRID" id="22956">
    <property type="interactions" value="2"/>
</dbReference>
<dbReference type="FunCoup" id="F4IAG2">
    <property type="interactions" value="1050"/>
</dbReference>
<dbReference type="MINT" id="F4IAG2"/>
<dbReference type="STRING" id="3702.F4IAG2"/>
<dbReference type="CAZy" id="CBM53">
    <property type="family name" value="Carbohydrate-Binding Module Family 53"/>
</dbReference>
<dbReference type="CAZy" id="GT5">
    <property type="family name" value="Glycosyltransferase Family 5"/>
</dbReference>
<dbReference type="iPTMnet" id="F4IAG2"/>
<dbReference type="PaxDb" id="3702-AT1G11720.2"/>
<dbReference type="ProMEX" id="F4IAG2"/>
<dbReference type="ProteomicsDB" id="228259">
    <molecule id="F4IAG2-1"/>
</dbReference>
<dbReference type="EnsemblPlants" id="AT1G11720.1">
    <molecule id="F4IAG2-1"/>
    <property type="protein sequence ID" value="AT1G11720.1"/>
    <property type="gene ID" value="AT1G11720"/>
</dbReference>
<dbReference type="GeneID" id="837716"/>
<dbReference type="Gramene" id="AT1G11720.1">
    <molecule id="F4IAG2-1"/>
    <property type="protein sequence ID" value="AT1G11720.1"/>
    <property type="gene ID" value="AT1G11720"/>
</dbReference>
<dbReference type="KEGG" id="ath:AT1G11720"/>
<dbReference type="Araport" id="AT1G11720"/>
<dbReference type="TAIR" id="AT1G11720">
    <property type="gene designation" value="SS3"/>
</dbReference>
<dbReference type="eggNOG" id="ENOG502QQTU">
    <property type="taxonomic scope" value="Eukaryota"/>
</dbReference>
<dbReference type="HOGENOM" id="CLU_002856_0_0_1"/>
<dbReference type="InParanoid" id="F4IAG2"/>
<dbReference type="OMA" id="FIPVAYT"/>
<dbReference type="BRENDA" id="2.4.1.21">
    <property type="organism ID" value="399"/>
</dbReference>
<dbReference type="UniPathway" id="UPA00152"/>
<dbReference type="PRO" id="PR:F4IAG2"/>
<dbReference type="Proteomes" id="UP000006548">
    <property type="component" value="Chromosome 1"/>
</dbReference>
<dbReference type="ExpressionAtlas" id="F4IAG2">
    <property type="expression patterns" value="baseline and differential"/>
</dbReference>
<dbReference type="GO" id="GO:0009501">
    <property type="term" value="C:amyloplast"/>
    <property type="evidence" value="ECO:0007669"/>
    <property type="project" value="UniProtKB-SubCell"/>
</dbReference>
<dbReference type="GO" id="GO:0009507">
    <property type="term" value="C:chloroplast"/>
    <property type="evidence" value="ECO:0007669"/>
    <property type="project" value="UniProtKB-SubCell"/>
</dbReference>
<dbReference type="GO" id="GO:0009011">
    <property type="term" value="F:alpha-1,4-glucan glucosyltransferase (ADP-glucose donor) activity"/>
    <property type="evidence" value="ECO:0007669"/>
    <property type="project" value="UniProtKB-EC"/>
</dbReference>
<dbReference type="GO" id="GO:0004373">
    <property type="term" value="F:alpha-1,4-glucan glucosyltransferase (UDP-glucose donor) activity"/>
    <property type="evidence" value="ECO:0007669"/>
    <property type="project" value="InterPro"/>
</dbReference>
<dbReference type="GO" id="GO:0042802">
    <property type="term" value="F:identical protein binding"/>
    <property type="evidence" value="ECO:0000353"/>
    <property type="project" value="IntAct"/>
</dbReference>
<dbReference type="GO" id="GO:2001070">
    <property type="term" value="F:starch binding"/>
    <property type="evidence" value="ECO:0007669"/>
    <property type="project" value="InterPro"/>
</dbReference>
<dbReference type="GO" id="GO:0010021">
    <property type="term" value="P:amylopectin biosynthetic process"/>
    <property type="evidence" value="ECO:0000316"/>
    <property type="project" value="UniProtKB"/>
</dbReference>
<dbReference type="GO" id="GO:0019252">
    <property type="term" value="P:starch biosynthetic process"/>
    <property type="evidence" value="ECO:0007669"/>
    <property type="project" value="UniProtKB-UniPathway"/>
</dbReference>
<dbReference type="CDD" id="cd03791">
    <property type="entry name" value="GT5_Glycogen_synthase_DULL1-like"/>
    <property type="match status" value="1"/>
</dbReference>
<dbReference type="FunFam" id="3.40.50.2000:FF:000258">
    <property type="entry name" value="Starch synthase 3"/>
    <property type="match status" value="1"/>
</dbReference>
<dbReference type="FunFam" id="3.40.50.2000:FF:000165">
    <property type="entry name" value="Starch synthase, chloroplastic/amyloplastic"/>
    <property type="match status" value="1"/>
</dbReference>
<dbReference type="Gene3D" id="3.40.50.2000">
    <property type="entry name" value="Glycogen Phosphorylase B"/>
    <property type="match status" value="2"/>
</dbReference>
<dbReference type="Gene3D" id="2.60.40.10">
    <property type="entry name" value="Immunoglobulins"/>
    <property type="match status" value="1"/>
</dbReference>
<dbReference type="HAMAP" id="MF_00484">
    <property type="entry name" value="Glycogen_synth"/>
    <property type="match status" value="1"/>
</dbReference>
<dbReference type="InterPro" id="IPR005085">
    <property type="entry name" value="CBM25"/>
</dbReference>
<dbReference type="InterPro" id="IPR011835">
    <property type="entry name" value="GS/SS"/>
</dbReference>
<dbReference type="InterPro" id="IPR013783">
    <property type="entry name" value="Ig-like_fold"/>
</dbReference>
<dbReference type="InterPro" id="IPR013534">
    <property type="entry name" value="Starch_synth_cat_dom"/>
</dbReference>
<dbReference type="PANTHER" id="PTHR46083">
    <property type="match status" value="1"/>
</dbReference>
<dbReference type="PANTHER" id="PTHR46083:SF5">
    <property type="entry name" value="STARCH SYNTHASE 3, CHLOROPLASTIC_AMYLOPLASTIC"/>
    <property type="match status" value="1"/>
</dbReference>
<dbReference type="Pfam" id="PF16760">
    <property type="entry name" value="CBM53"/>
    <property type="match status" value="3"/>
</dbReference>
<dbReference type="Pfam" id="PF08323">
    <property type="entry name" value="Glyco_transf_5"/>
    <property type="match status" value="1"/>
</dbReference>
<dbReference type="SMART" id="SM01066">
    <property type="entry name" value="CBM_25"/>
    <property type="match status" value="3"/>
</dbReference>
<dbReference type="SUPFAM" id="SSF53756">
    <property type="entry name" value="UDP-Glycosyltransferase/glycogen phosphorylase"/>
    <property type="match status" value="1"/>
</dbReference>
<organism>
    <name type="scientific">Arabidopsis thaliana</name>
    <name type="common">Mouse-ear cress</name>
    <dbReference type="NCBI Taxonomy" id="3702"/>
    <lineage>
        <taxon>Eukaryota</taxon>
        <taxon>Viridiplantae</taxon>
        <taxon>Streptophyta</taxon>
        <taxon>Embryophyta</taxon>
        <taxon>Tracheophyta</taxon>
        <taxon>Spermatophyta</taxon>
        <taxon>Magnoliopsida</taxon>
        <taxon>eudicotyledons</taxon>
        <taxon>Gunneridae</taxon>
        <taxon>Pentapetalae</taxon>
        <taxon>rosids</taxon>
        <taxon>malvids</taxon>
        <taxon>Brassicales</taxon>
        <taxon>Brassicaceae</taxon>
        <taxon>Camelineae</taxon>
        <taxon>Arabidopsis</taxon>
    </lineage>
</organism>
<proteinExistence type="evidence at protein level"/>
<gene>
    <name type="primary">SS3</name>
    <name type="ordered locus">At1g11720</name>
    <name type="ORF">F25C20.13</name>
</gene>
<keyword id="KW-0025">Alternative splicing</keyword>
<keyword id="KW-0035">Amyloplast</keyword>
<keyword id="KW-0150">Chloroplast</keyword>
<keyword id="KW-0175">Coiled coil</keyword>
<keyword id="KW-0328">Glycosyltransferase</keyword>
<keyword id="KW-0934">Plastid</keyword>
<keyword id="KW-1185">Reference proteome</keyword>
<keyword id="KW-0750">Starch biosynthesis</keyword>
<keyword id="KW-0808">Transferase</keyword>
<keyword id="KW-0809">Transit peptide</keyword>
<protein>
    <recommendedName>
        <fullName>Starch synthase 3, chloroplastic/amyloplastic</fullName>
        <shortName>AtSS3</shortName>
        <ecNumber>2.4.1.21</ecNumber>
    </recommendedName>
    <alternativeName>
        <fullName>Soluble starch synthase III</fullName>
    </alternativeName>
</protein>